<organism>
    <name type="scientific">Arabidopsis thaliana</name>
    <name type="common">Mouse-ear cress</name>
    <dbReference type="NCBI Taxonomy" id="3702"/>
    <lineage>
        <taxon>Eukaryota</taxon>
        <taxon>Viridiplantae</taxon>
        <taxon>Streptophyta</taxon>
        <taxon>Embryophyta</taxon>
        <taxon>Tracheophyta</taxon>
        <taxon>Spermatophyta</taxon>
        <taxon>Magnoliopsida</taxon>
        <taxon>eudicotyledons</taxon>
        <taxon>Gunneridae</taxon>
        <taxon>Pentapetalae</taxon>
        <taxon>rosids</taxon>
        <taxon>malvids</taxon>
        <taxon>Brassicales</taxon>
        <taxon>Brassicaceae</taxon>
        <taxon>Camelineae</taxon>
        <taxon>Arabidopsis</taxon>
    </lineage>
</organism>
<accession>Q9LW44</accession>
<accession>F4J6N6</accession>
<dbReference type="EC" id="3.2.1.78"/>
<dbReference type="EMBL" id="AB016878">
    <property type="protein sequence ID" value="BAB01021.1"/>
    <property type="status" value="ALT_SEQ"/>
    <property type="molecule type" value="Genomic_DNA"/>
</dbReference>
<dbReference type="EMBL" id="CP002686">
    <property type="protein sequence ID" value="AEE77650.1"/>
    <property type="status" value="ALT_SEQ"/>
    <property type="molecule type" value="Genomic_DNA"/>
</dbReference>
<dbReference type="RefSeq" id="NP_189675.2">
    <property type="nucleotide sequence ID" value="NM_113955.2"/>
</dbReference>
<dbReference type="SMR" id="Q9LW44"/>
<dbReference type="FunCoup" id="Q9LW44">
    <property type="interactions" value="62"/>
</dbReference>
<dbReference type="STRING" id="3702.Q9LW44"/>
<dbReference type="CAZy" id="GH5">
    <property type="family name" value="Glycoside Hydrolase Family 5"/>
</dbReference>
<dbReference type="GlyCosmos" id="Q9LW44">
    <property type="glycosylation" value="1 site, No reported glycans"/>
</dbReference>
<dbReference type="GlyGen" id="Q9LW44">
    <property type="glycosylation" value="1 site"/>
</dbReference>
<dbReference type="PeptideAtlas" id="Q9LW44"/>
<dbReference type="GeneID" id="822768"/>
<dbReference type="KEGG" id="ath:AT3G30540"/>
<dbReference type="Araport" id="AT3G30540"/>
<dbReference type="TAIR" id="AT3G30540"/>
<dbReference type="InParanoid" id="Q9LW44"/>
<dbReference type="PhylomeDB" id="Q9LW44"/>
<dbReference type="BioCyc" id="ARA:AT3G30540-MONOMER"/>
<dbReference type="Proteomes" id="UP000006548">
    <property type="component" value="Chromosome 3"/>
</dbReference>
<dbReference type="ExpressionAtlas" id="Q9LW44">
    <property type="expression patterns" value="baseline and differential"/>
</dbReference>
<dbReference type="GO" id="GO:0005576">
    <property type="term" value="C:extracellular region"/>
    <property type="evidence" value="ECO:0007669"/>
    <property type="project" value="UniProtKB-SubCell"/>
</dbReference>
<dbReference type="GO" id="GO:0016985">
    <property type="term" value="F:mannan endo-1,4-beta-mannosidase activity"/>
    <property type="evidence" value="ECO:0000318"/>
    <property type="project" value="GO_Central"/>
</dbReference>
<dbReference type="GO" id="GO:0000272">
    <property type="term" value="P:polysaccharide catabolic process"/>
    <property type="evidence" value="ECO:0007669"/>
    <property type="project" value="InterPro"/>
</dbReference>
<dbReference type="FunFam" id="3.20.20.80:FF:000012">
    <property type="entry name" value="Mannan endo-1,4-beta-mannosidase 6"/>
    <property type="match status" value="1"/>
</dbReference>
<dbReference type="Gene3D" id="3.20.20.80">
    <property type="entry name" value="Glycosidases"/>
    <property type="match status" value="1"/>
</dbReference>
<dbReference type="InterPro" id="IPR001547">
    <property type="entry name" value="Glyco_hydro_5"/>
</dbReference>
<dbReference type="InterPro" id="IPR017853">
    <property type="entry name" value="Glycoside_hydrolase_SF"/>
</dbReference>
<dbReference type="InterPro" id="IPR045053">
    <property type="entry name" value="MAN-like"/>
</dbReference>
<dbReference type="PANTHER" id="PTHR31451">
    <property type="match status" value="1"/>
</dbReference>
<dbReference type="PANTHER" id="PTHR31451:SF42">
    <property type="entry name" value="MANNAN ENDO-1,4-BETA-MANNOSIDASE 3-RELATED"/>
    <property type="match status" value="1"/>
</dbReference>
<dbReference type="Pfam" id="PF00150">
    <property type="entry name" value="Cellulase"/>
    <property type="match status" value="1"/>
</dbReference>
<dbReference type="SUPFAM" id="SSF51445">
    <property type="entry name" value="(Trans)glycosidases"/>
    <property type="match status" value="1"/>
</dbReference>
<comment type="catalytic activity">
    <reaction>
        <text>Random hydrolysis of (1-&gt;4)-beta-D-mannosidic linkages in mannans, galactomannans and glucomannans.</text>
        <dbReference type="EC" id="3.2.1.78"/>
    </reaction>
</comment>
<comment type="subcellular location">
    <subcellularLocation>
        <location evidence="4">Secreted</location>
    </subcellularLocation>
</comment>
<comment type="similarity">
    <text evidence="4">Belongs to the glycosyl hydrolase 5 (cellulase A) family.</text>
</comment>
<comment type="caution">
    <text evidence="4">Could be the product of a pseudogene.</text>
</comment>
<comment type="sequence caution" evidence="4">
    <conflict type="erroneous gene model prediction">
        <sequence resource="EMBL-CDS" id="AEE77650"/>
    </conflict>
</comment>
<comment type="sequence caution" evidence="4">
    <conflict type="erroneous termination">
        <sequence resource="EMBL-CDS" id="AEE77650"/>
    </conflict>
    <text>Truncated C-terminus.</text>
</comment>
<comment type="sequence caution" evidence="4">
    <conflict type="frameshift">
        <sequence resource="EMBL-CDS" id="AEE77650"/>
    </conflict>
</comment>
<comment type="sequence caution" evidence="4">
    <conflict type="erroneous gene model prediction">
        <sequence resource="EMBL-CDS" id="BAB01021"/>
    </conflict>
</comment>
<comment type="sequence caution" evidence="4">
    <conflict type="erroneous termination">
        <sequence resource="EMBL-CDS" id="BAB01021"/>
    </conflict>
    <text>Truncated C-terminus.</text>
</comment>
<comment type="sequence caution" evidence="4">
    <conflict type="frameshift">
        <sequence resource="EMBL-CDS" id="BAB01021"/>
    </conflict>
</comment>
<evidence type="ECO:0000250" key="1">
    <source>
        <dbReference type="UniProtKB" id="B4XC07"/>
    </source>
</evidence>
<evidence type="ECO:0000250" key="2">
    <source>
        <dbReference type="UniProtKB" id="Q99036"/>
    </source>
</evidence>
<evidence type="ECO:0000255" key="3"/>
<evidence type="ECO:0000305" key="4"/>
<name>MANP_ARATH</name>
<proteinExistence type="uncertain"/>
<gene>
    <name type="primary">MANP</name>
    <name type="ordered locus">At3g30540</name>
    <name type="ORF">MQP15.18</name>
</gene>
<feature type="signal peptide" evidence="3">
    <location>
        <begin position="1"/>
        <end position="23"/>
    </location>
</feature>
<feature type="chain" id="PRO_0000277481" description="Putative mannan endo-1,4-beta-mannosidase P">
    <location>
        <begin position="24"/>
        <end position="408"/>
    </location>
</feature>
<feature type="active site" description="Proton donor" evidence="2">
    <location>
        <position position="202"/>
    </location>
</feature>
<feature type="active site" description="Nucleophile" evidence="2">
    <location>
        <position position="322"/>
    </location>
</feature>
<feature type="binding site" evidence="1">
    <location>
        <position position="85"/>
    </location>
    <ligand>
        <name>substrate</name>
    </ligand>
</feature>
<feature type="binding site" evidence="1">
    <location>
        <position position="201"/>
    </location>
    <ligand>
        <name>substrate</name>
    </ligand>
</feature>
<feature type="binding site" evidence="1">
    <location>
        <position position="364"/>
    </location>
    <ligand>
        <name>substrate</name>
    </ligand>
</feature>
<feature type="glycosylation site" description="N-linked (GlcNAc...) asparagine" evidence="3">
    <location>
        <position position="73"/>
    </location>
</feature>
<sequence length="408" mass="45356">MKCLCFIVLLAIVIAQSYVGVEAAPSDGFVSRNGVQFILNGKPFYANGFNAYWLAYEATDPATRFKITNVFQNATSLGLTIARTWGFRNGAIYRALQTAPGSYDEQTFQGLDFGIAEAKRVGIKLIIPLVNNWDDYGGKKQYVDWARSKGEMVSSNDDFYRNPVIKEFYKNHVKTMLNRVNTFTKVAYKDEPASMAWQLMNEPRCGVDRSGKTLMAWINEMALFVKSVDPNHLLSTGHEGFYGDSSPERKNSLNPVSANTVGADFIANHNIDAIDFASMHCGSDLWFQRLDQNSRLAFIKRWLEGHIEDAQNNLKKPVILAEFGLGSDTPRYTLANRDDVFTTTYDIIYISTQKGGSAAGALFWEVISEGVSNFAGPSSIILSDKSSTVNIISEQRRKMGLLGGTKGK</sequence>
<reference key="1">
    <citation type="journal article" date="2000" name="DNA Res.">
        <title>Structural analysis of Arabidopsis thaliana chromosome 3. I. Sequence features of the regions of 4,504,864 bp covered by sixty P1 and TAC clones.</title>
        <authorList>
            <person name="Sato S."/>
            <person name="Nakamura Y."/>
            <person name="Kaneko T."/>
            <person name="Katoh T."/>
            <person name="Asamizu E."/>
            <person name="Tabata S."/>
        </authorList>
    </citation>
    <scope>NUCLEOTIDE SEQUENCE [LARGE SCALE GENOMIC DNA]</scope>
    <source>
        <strain>cv. Columbia</strain>
    </source>
</reference>
<reference key="2">
    <citation type="journal article" date="2017" name="Plant J.">
        <title>Araport11: a complete reannotation of the Arabidopsis thaliana reference genome.</title>
        <authorList>
            <person name="Cheng C.Y."/>
            <person name="Krishnakumar V."/>
            <person name="Chan A.P."/>
            <person name="Thibaud-Nissen F."/>
            <person name="Schobel S."/>
            <person name="Town C.D."/>
        </authorList>
    </citation>
    <scope>GENOME REANNOTATION</scope>
    <source>
        <strain>cv. Columbia</strain>
    </source>
</reference>
<reference key="3">
    <citation type="journal article" date="2007" name="Funct. Integr. Genomics">
        <title>The endo-beta-mannanase gene families in Arabidopsis, rice, and poplar.</title>
        <authorList>
            <person name="Yuan J.S."/>
            <person name="Yang X."/>
            <person name="Lai J."/>
            <person name="Lin H."/>
            <person name="Cheng Z.-M."/>
            <person name="Nonogaki H."/>
            <person name="Chen F."/>
        </authorList>
    </citation>
    <scope>GENE FAMILY</scope>
</reference>
<keyword id="KW-0325">Glycoprotein</keyword>
<keyword id="KW-0326">Glycosidase</keyword>
<keyword id="KW-0378">Hydrolase</keyword>
<keyword id="KW-1185">Reference proteome</keyword>
<keyword id="KW-0964">Secreted</keyword>
<keyword id="KW-0732">Signal</keyword>
<protein>
    <recommendedName>
        <fullName>Putative mannan endo-1,4-beta-mannosidase P</fullName>
        <ecNumber>3.2.1.78</ecNumber>
    </recommendedName>
    <alternativeName>
        <fullName>Beta-mannanase P</fullName>
    </alternativeName>
    <alternativeName>
        <fullName>Endo-beta-1,4-mannanase P</fullName>
        <shortName>AtMANP</shortName>
    </alternativeName>
</protein>